<feature type="initiator methionine" description="Removed" evidence="1">
    <location>
        <position position="1"/>
    </location>
</feature>
<feature type="chain" id="PRO_0000054485" description="Alcohol dehydrogenase">
    <location>
        <begin position="2"/>
        <end position="254"/>
    </location>
</feature>
<feature type="active site" description="Proton acceptor" evidence="2">
    <location>
        <position position="151"/>
    </location>
</feature>
<feature type="binding site" evidence="1">
    <location>
        <begin position="10"/>
        <end position="33"/>
    </location>
    <ligand>
        <name>NAD(+)</name>
        <dbReference type="ChEBI" id="CHEBI:57540"/>
    </ligand>
</feature>
<feature type="binding site" evidence="1">
    <location>
        <position position="138"/>
    </location>
    <ligand>
        <name>substrate</name>
    </ligand>
</feature>
<gene>
    <name type="primary">Adh</name>
</gene>
<proteinExistence type="inferred from homology"/>
<reference key="1">
    <citation type="journal article" date="1991" name="Mol. Biol. Evol.">
        <title>The molecular evolution of the alcohol dehydrogenase locus and the phylogeny of Hawaiian Drosophila.</title>
        <authorList>
            <person name="Thomas R.H."/>
            <person name="Hunt J.A."/>
        </authorList>
    </citation>
    <scope>NUCLEOTIDE SEQUENCE [GENOMIC DNA]</scope>
</reference>
<protein>
    <recommendedName>
        <fullName>Alcohol dehydrogenase</fullName>
        <ecNumber>1.1.1.1</ecNumber>
    </recommendedName>
</protein>
<evidence type="ECO:0000250" key="1"/>
<evidence type="ECO:0000255" key="2">
    <source>
        <dbReference type="PROSITE-ProRule" id="PRU10001"/>
    </source>
</evidence>
<evidence type="ECO:0000305" key="3"/>
<accession>Q00672</accession>
<dbReference type="EC" id="1.1.1.1"/>
<dbReference type="EMBL" id="M60793">
    <property type="protein sequence ID" value="AAA72982.1"/>
    <property type="molecule type" value="Genomic_DNA"/>
</dbReference>
<dbReference type="SMR" id="Q00672"/>
<dbReference type="GO" id="GO:0005737">
    <property type="term" value="C:cytoplasm"/>
    <property type="evidence" value="ECO:0007669"/>
    <property type="project" value="TreeGrafter"/>
</dbReference>
<dbReference type="GO" id="GO:0004022">
    <property type="term" value="F:alcohol dehydrogenase (NAD+) activity"/>
    <property type="evidence" value="ECO:0007669"/>
    <property type="project" value="UniProtKB-EC"/>
</dbReference>
<dbReference type="GO" id="GO:0006066">
    <property type="term" value="P:alcohol metabolic process"/>
    <property type="evidence" value="ECO:0007669"/>
    <property type="project" value="InterPro"/>
</dbReference>
<dbReference type="CDD" id="cd05323">
    <property type="entry name" value="ADH_SDR_c_like"/>
    <property type="match status" value="1"/>
</dbReference>
<dbReference type="FunFam" id="3.40.50.720:FF:000302">
    <property type="entry name" value="Alcohol dehydrogenase"/>
    <property type="match status" value="1"/>
</dbReference>
<dbReference type="Gene3D" id="3.40.50.720">
    <property type="entry name" value="NAD(P)-binding Rossmann-like Domain"/>
    <property type="match status" value="1"/>
</dbReference>
<dbReference type="InterPro" id="IPR002425">
    <property type="entry name" value="ADH_Drosophila-type"/>
</dbReference>
<dbReference type="InterPro" id="IPR036291">
    <property type="entry name" value="NAD(P)-bd_dom_sf"/>
</dbReference>
<dbReference type="InterPro" id="IPR020904">
    <property type="entry name" value="Sc_DH/Rdtase_CS"/>
</dbReference>
<dbReference type="InterPro" id="IPR002347">
    <property type="entry name" value="SDR_fam"/>
</dbReference>
<dbReference type="PANTHER" id="PTHR44229">
    <property type="entry name" value="15-HYDROXYPROSTAGLANDIN DEHYDROGENASE [NAD(+)]"/>
    <property type="match status" value="1"/>
</dbReference>
<dbReference type="PANTHER" id="PTHR44229:SF8">
    <property type="entry name" value="ALCOHOL DEHYDROGENASE-RELATED"/>
    <property type="match status" value="1"/>
</dbReference>
<dbReference type="Pfam" id="PF00106">
    <property type="entry name" value="adh_short"/>
    <property type="match status" value="1"/>
</dbReference>
<dbReference type="PRINTS" id="PR01168">
    <property type="entry name" value="ALCDHDRGNASE"/>
</dbReference>
<dbReference type="PRINTS" id="PR01167">
    <property type="entry name" value="INSADHFAMILY"/>
</dbReference>
<dbReference type="PRINTS" id="PR00080">
    <property type="entry name" value="SDRFAMILY"/>
</dbReference>
<dbReference type="SUPFAM" id="SSF51735">
    <property type="entry name" value="NAD(P)-binding Rossmann-fold domains"/>
    <property type="match status" value="1"/>
</dbReference>
<dbReference type="PROSITE" id="PS00061">
    <property type="entry name" value="ADH_SHORT"/>
    <property type="match status" value="1"/>
</dbReference>
<sequence>MVIANSNIIFVAGLGGIGLDTSREIVKSGPKNLVLLDRIDNPAAINELRALNPKVTVTFYSYDVTVPLAETKKLLKTIFDKLKTVDLLINGAGILDDHQIERTIAVNFTGTVNTTTAIMDFWDKRKGGPGGIVANICSVTGFNSIYQVPVYSASKAAALSFTGSIAKLAPITGVTAYSINPGITKTVLVHKFNSWLNVEPRVAELLLDHPTQTTVQCAQNFVKAIEANENGAIWQLDLGRLEAIEWTKHWDSRI</sequence>
<organism>
    <name type="scientific">Drosophila nigra</name>
    <name type="common">Fruit fly</name>
    <name type="synonym">Idiomyia nigra</name>
    <dbReference type="NCBI Taxonomy" id="7272"/>
    <lineage>
        <taxon>Eukaryota</taxon>
        <taxon>Metazoa</taxon>
        <taxon>Ecdysozoa</taxon>
        <taxon>Arthropoda</taxon>
        <taxon>Hexapoda</taxon>
        <taxon>Insecta</taxon>
        <taxon>Pterygota</taxon>
        <taxon>Neoptera</taxon>
        <taxon>Endopterygota</taxon>
        <taxon>Diptera</taxon>
        <taxon>Brachycera</taxon>
        <taxon>Muscomorpha</taxon>
        <taxon>Ephydroidea</taxon>
        <taxon>Drosophilidae</taxon>
        <taxon>Drosophila</taxon>
        <taxon>Hawaiian Drosophila</taxon>
    </lineage>
</organism>
<keyword id="KW-0520">NAD</keyword>
<keyword id="KW-0560">Oxidoreductase</keyword>
<name>ADH_DRONI</name>
<comment type="catalytic activity">
    <reaction evidence="2">
        <text>a primary alcohol + NAD(+) = an aldehyde + NADH + H(+)</text>
        <dbReference type="Rhea" id="RHEA:10736"/>
        <dbReference type="ChEBI" id="CHEBI:15378"/>
        <dbReference type="ChEBI" id="CHEBI:15734"/>
        <dbReference type="ChEBI" id="CHEBI:17478"/>
        <dbReference type="ChEBI" id="CHEBI:57540"/>
        <dbReference type="ChEBI" id="CHEBI:57945"/>
        <dbReference type="EC" id="1.1.1.1"/>
    </reaction>
</comment>
<comment type="catalytic activity">
    <reaction evidence="2">
        <text>a secondary alcohol + NAD(+) = a ketone + NADH + H(+)</text>
        <dbReference type="Rhea" id="RHEA:10740"/>
        <dbReference type="ChEBI" id="CHEBI:15378"/>
        <dbReference type="ChEBI" id="CHEBI:17087"/>
        <dbReference type="ChEBI" id="CHEBI:35681"/>
        <dbReference type="ChEBI" id="CHEBI:57540"/>
        <dbReference type="ChEBI" id="CHEBI:57945"/>
        <dbReference type="EC" id="1.1.1.1"/>
    </reaction>
</comment>
<comment type="subunit">
    <text>Homodimer.</text>
</comment>
<comment type="similarity">
    <text evidence="3">Belongs to the short-chain dehydrogenases/reductases (SDR) family.</text>
</comment>